<name>S5A2_PIG</name>
<feature type="chain" id="PRO_0000213679" description="3-oxo-5-alpha-steroid 4-dehydrogenase 2">
    <location>
        <begin position="1"/>
        <end position="254"/>
    </location>
</feature>
<feature type="transmembrane region" description="Helical" evidence="3">
    <location>
        <begin position="8"/>
        <end position="28"/>
    </location>
</feature>
<feature type="transmembrane region" description="Helical" evidence="3">
    <location>
        <begin position="72"/>
        <end position="92"/>
    </location>
</feature>
<feature type="transmembrane region" description="Helical" evidence="3">
    <location>
        <begin position="146"/>
        <end position="166"/>
    </location>
</feature>
<feature type="transmembrane region" description="Helical" evidence="3">
    <location>
        <begin position="206"/>
        <end position="226"/>
    </location>
</feature>
<proteinExistence type="evidence at transcript level"/>
<accession>O18765</accession>
<comment type="function">
    <text evidence="2">Converts testosterone (T) into 5-alpha-dihydrotestosterone (DHT) and progesterone or corticosterone into their corresponding 5-alpha-3-oxosteroids. It plays a central role in sexual differentiation and androgen physiology (By similarity).</text>
</comment>
<comment type="catalytic activity">
    <reaction evidence="2">
        <text>a 3-oxo-5alpha-steroid + NADP(+) = a 3-oxo-Delta(4)-steroid + NADPH + H(+)</text>
        <dbReference type="Rhea" id="RHEA:54384"/>
        <dbReference type="ChEBI" id="CHEBI:13601"/>
        <dbReference type="ChEBI" id="CHEBI:15378"/>
        <dbReference type="ChEBI" id="CHEBI:47909"/>
        <dbReference type="ChEBI" id="CHEBI:57783"/>
        <dbReference type="ChEBI" id="CHEBI:58349"/>
        <dbReference type="EC" id="1.3.1.22"/>
    </reaction>
</comment>
<comment type="catalytic activity">
    <reaction evidence="2">
        <text>17beta-hydroxy-5alpha-androstan-3-one + NADP(+) = testosterone + NADPH + H(+)</text>
        <dbReference type="Rhea" id="RHEA:50820"/>
        <dbReference type="ChEBI" id="CHEBI:15378"/>
        <dbReference type="ChEBI" id="CHEBI:16330"/>
        <dbReference type="ChEBI" id="CHEBI:17347"/>
        <dbReference type="ChEBI" id="CHEBI:57783"/>
        <dbReference type="ChEBI" id="CHEBI:58349"/>
        <dbReference type="EC" id="1.3.1.22"/>
    </reaction>
    <physiologicalReaction direction="right-to-left" evidence="2">
        <dbReference type="Rhea" id="RHEA:50822"/>
    </physiologicalReaction>
</comment>
<comment type="catalytic activity">
    <reaction evidence="2">
        <text>5alpha-pregnane-3,20-dione + NADP(+) = progesterone + NADPH + H(+)</text>
        <dbReference type="Rhea" id="RHEA:21952"/>
        <dbReference type="ChEBI" id="CHEBI:15378"/>
        <dbReference type="ChEBI" id="CHEBI:17026"/>
        <dbReference type="ChEBI" id="CHEBI:28952"/>
        <dbReference type="ChEBI" id="CHEBI:57783"/>
        <dbReference type="ChEBI" id="CHEBI:58349"/>
        <dbReference type="EC" id="1.3.1.22"/>
    </reaction>
    <physiologicalReaction direction="right-to-left" evidence="2">
        <dbReference type="Rhea" id="RHEA:21954"/>
    </physiologicalReaction>
</comment>
<comment type="subcellular location">
    <subcellularLocation>
        <location evidence="1">Microsome membrane</location>
        <topology evidence="1">Multi-pass membrane protein</topology>
    </subcellularLocation>
    <subcellularLocation>
        <location evidence="4">Endoplasmic reticulum membrane</location>
        <topology evidence="4">Multi-pass membrane protein</topology>
    </subcellularLocation>
</comment>
<comment type="similarity">
    <text evidence="4">Belongs to the steroid 5-alpha reductase family.</text>
</comment>
<keyword id="KW-0221">Differentiation</keyword>
<keyword id="KW-0256">Endoplasmic reticulum</keyword>
<keyword id="KW-0443">Lipid metabolism</keyword>
<keyword id="KW-0472">Membrane</keyword>
<keyword id="KW-0492">Microsome</keyword>
<keyword id="KW-0521">NADP</keyword>
<keyword id="KW-0560">Oxidoreductase</keyword>
<keyword id="KW-1185">Reference proteome</keyword>
<keyword id="KW-0726">Sexual differentiation</keyword>
<keyword id="KW-0812">Transmembrane</keyword>
<keyword id="KW-1133">Transmembrane helix</keyword>
<protein>
    <recommendedName>
        <fullName>3-oxo-5-alpha-steroid 4-dehydrogenase 2</fullName>
        <ecNumber evidence="2">1.3.1.22</ecNumber>
    </recommendedName>
    <alternativeName>
        <fullName>5 alpha-SR2</fullName>
    </alternativeName>
    <alternativeName>
        <fullName>SR type 2</fullName>
    </alternativeName>
    <alternativeName>
        <fullName>Steroid 5-alpha-reductase 2</fullName>
        <shortName>S5AR 2</shortName>
    </alternativeName>
</protein>
<sequence>MPVRCQQSPVLAGSATLAALGALALYFAEPSGYGKYTESLTPAAIRLPARAAWFLQELPSFVVPAGILAGQPRSLFGPPATVLLGLFCAHYFHRTFVYSLLTRGRPFPVVFLFRGFVFCMGNGLLQGYYLVYCAEYPAEWYTDIRFSLGVFLFILGMGINIHSDYILRQLRKPGEVIYKIPQGGLFTYVSGANFLGEIIEWIGYALATWSLPALAFAFFSLCFLGLRAFHHHRFYVKMFEDYPKSRKALIPFIF</sequence>
<reference key="1">
    <citation type="submission" date="2000-08" db="EMBL/GenBank/DDBJ databases">
        <authorList>
            <person name="Lacroix D.A."/>
            <person name="Men T."/>
            <person name="Houde A."/>
            <person name="Murphy B.D."/>
        </authorList>
    </citation>
    <scope>NUCLEOTIDE SEQUENCE [MRNA]</scope>
    <source>
        <tissue>Epididymis</tissue>
    </source>
</reference>
<evidence type="ECO:0000250" key="1"/>
<evidence type="ECO:0000250" key="2">
    <source>
        <dbReference type="UniProtKB" id="P31213"/>
    </source>
</evidence>
<evidence type="ECO:0000255" key="3"/>
<evidence type="ECO:0000305" key="4"/>
<gene>
    <name type="primary">SRD5A2</name>
    <name type="synonym">ST5AR2</name>
</gene>
<organism>
    <name type="scientific">Sus scrofa</name>
    <name type="common">Pig</name>
    <dbReference type="NCBI Taxonomy" id="9823"/>
    <lineage>
        <taxon>Eukaryota</taxon>
        <taxon>Metazoa</taxon>
        <taxon>Chordata</taxon>
        <taxon>Craniata</taxon>
        <taxon>Vertebrata</taxon>
        <taxon>Euteleostomi</taxon>
        <taxon>Mammalia</taxon>
        <taxon>Eutheria</taxon>
        <taxon>Laurasiatheria</taxon>
        <taxon>Artiodactyla</taxon>
        <taxon>Suina</taxon>
        <taxon>Suidae</taxon>
        <taxon>Sus</taxon>
    </lineage>
</organism>
<dbReference type="EC" id="1.3.1.22" evidence="2"/>
<dbReference type="EMBL" id="AF008440">
    <property type="protein sequence ID" value="AAB69279.2"/>
    <property type="molecule type" value="mRNA"/>
</dbReference>
<dbReference type="RefSeq" id="NP_999153.1">
    <property type="nucleotide sequence ID" value="NM_213988.1"/>
</dbReference>
<dbReference type="SMR" id="O18765"/>
<dbReference type="FunCoup" id="O18765">
    <property type="interactions" value="97"/>
</dbReference>
<dbReference type="STRING" id="9823.ENSSSCP00000009087"/>
<dbReference type="PaxDb" id="9823-ENSSSCP00000009087"/>
<dbReference type="PeptideAtlas" id="O18765"/>
<dbReference type="Ensembl" id="ENSSSCT00000009325.5">
    <property type="protein sequence ID" value="ENSSSCP00000009087.5"/>
    <property type="gene ID" value="ENSSSCG00000008521.5"/>
</dbReference>
<dbReference type="Ensembl" id="ENSSSCT00030046625.1">
    <property type="protein sequence ID" value="ENSSSCP00030021001.1"/>
    <property type="gene ID" value="ENSSSCG00030033689.1"/>
</dbReference>
<dbReference type="Ensembl" id="ENSSSCT00040065105.1">
    <property type="protein sequence ID" value="ENSSSCP00040027543.1"/>
    <property type="gene ID" value="ENSSSCG00040048320.1"/>
</dbReference>
<dbReference type="Ensembl" id="ENSSSCT00045015342.1">
    <property type="protein sequence ID" value="ENSSSCP00045010660.1"/>
    <property type="gene ID" value="ENSSSCG00045009063.1"/>
</dbReference>
<dbReference type="Ensembl" id="ENSSSCT00055036688.1">
    <property type="protein sequence ID" value="ENSSSCP00055029157.1"/>
    <property type="gene ID" value="ENSSSCG00055018745.1"/>
</dbReference>
<dbReference type="Ensembl" id="ENSSSCT00060032689.1">
    <property type="protein sequence ID" value="ENSSSCP00060014019.1"/>
    <property type="gene ID" value="ENSSSCG00060024102.1"/>
</dbReference>
<dbReference type="Ensembl" id="ENSSSCT00090052506">
    <property type="protein sequence ID" value="ENSSSCP00090032752"/>
    <property type="gene ID" value="ENSSSCG00090029637"/>
</dbReference>
<dbReference type="Ensembl" id="ENSSSCT00105043329">
    <property type="protein sequence ID" value="ENSSSCP00105030207"/>
    <property type="gene ID" value="ENSSSCG00105022774"/>
</dbReference>
<dbReference type="Ensembl" id="ENSSSCT00110015531">
    <property type="protein sequence ID" value="ENSSSCP00110010812"/>
    <property type="gene ID" value="ENSSSCG00110007988"/>
</dbReference>
<dbReference type="Ensembl" id="ENSSSCT00115010373">
    <property type="protein sequence ID" value="ENSSSCP00115009767"/>
    <property type="gene ID" value="ENSSSCG00115005992"/>
</dbReference>
<dbReference type="Ensembl" id="ENSSSCT00130016477">
    <property type="protein sequence ID" value="ENSSSCP00130011159"/>
    <property type="gene ID" value="ENSSSCG00130008908"/>
</dbReference>
<dbReference type="GeneID" id="397048"/>
<dbReference type="KEGG" id="ssc:397048"/>
<dbReference type="CTD" id="6716"/>
<dbReference type="VGNC" id="VGNC:93449">
    <property type="gene designation" value="SRD5A2"/>
</dbReference>
<dbReference type="eggNOG" id="KOG1638">
    <property type="taxonomic scope" value="Eukaryota"/>
</dbReference>
<dbReference type="GeneTree" id="ENSGT00950000182886"/>
<dbReference type="HOGENOM" id="CLU_065395_3_0_1"/>
<dbReference type="InParanoid" id="O18765"/>
<dbReference type="OMA" id="PEEWYTD"/>
<dbReference type="OrthoDB" id="5788137at2759"/>
<dbReference type="Reactome" id="R-SSC-193048">
    <property type="pathway name" value="Androgen biosynthesis"/>
</dbReference>
<dbReference type="Proteomes" id="UP000008227">
    <property type="component" value="Chromosome 3"/>
</dbReference>
<dbReference type="Proteomes" id="UP000314985">
    <property type="component" value="Unplaced"/>
</dbReference>
<dbReference type="Proteomes" id="UP000694570">
    <property type="component" value="Unplaced"/>
</dbReference>
<dbReference type="Proteomes" id="UP000694571">
    <property type="component" value="Unplaced"/>
</dbReference>
<dbReference type="Proteomes" id="UP000694720">
    <property type="component" value="Unplaced"/>
</dbReference>
<dbReference type="Proteomes" id="UP000694722">
    <property type="component" value="Unplaced"/>
</dbReference>
<dbReference type="Proteomes" id="UP000694723">
    <property type="component" value="Unplaced"/>
</dbReference>
<dbReference type="Proteomes" id="UP000694724">
    <property type="component" value="Unplaced"/>
</dbReference>
<dbReference type="Proteomes" id="UP000694725">
    <property type="component" value="Unplaced"/>
</dbReference>
<dbReference type="Proteomes" id="UP000694726">
    <property type="component" value="Unplaced"/>
</dbReference>
<dbReference type="Proteomes" id="UP000694727">
    <property type="component" value="Unplaced"/>
</dbReference>
<dbReference type="Proteomes" id="UP000694728">
    <property type="component" value="Unplaced"/>
</dbReference>
<dbReference type="GO" id="GO:0005789">
    <property type="term" value="C:endoplasmic reticulum membrane"/>
    <property type="evidence" value="ECO:0007669"/>
    <property type="project" value="UniProtKB-SubCell"/>
</dbReference>
<dbReference type="GO" id="GO:0047751">
    <property type="term" value="F:3-oxo-5-alpha-steroid 4-dehydrogenase (NADP+) activity"/>
    <property type="evidence" value="ECO:0007669"/>
    <property type="project" value="UniProtKB-EC"/>
</dbReference>
<dbReference type="GO" id="GO:0030283">
    <property type="term" value="F:testosterone dehydrogenase [NAD(P)+] activity"/>
    <property type="evidence" value="ECO:0000250"/>
    <property type="project" value="UniProtKB"/>
</dbReference>
<dbReference type="GO" id="GO:0006702">
    <property type="term" value="P:androgen biosynthetic process"/>
    <property type="evidence" value="ECO:0007669"/>
    <property type="project" value="Ensembl"/>
</dbReference>
<dbReference type="GO" id="GO:0030154">
    <property type="term" value="P:cell differentiation"/>
    <property type="evidence" value="ECO:0007669"/>
    <property type="project" value="UniProtKB-KW"/>
</dbReference>
<dbReference type="GO" id="GO:0030539">
    <property type="term" value="P:male genitalia development"/>
    <property type="evidence" value="ECO:0007669"/>
    <property type="project" value="Ensembl"/>
</dbReference>
<dbReference type="GO" id="GO:0008584">
    <property type="term" value="P:male gonad development"/>
    <property type="evidence" value="ECO:0007669"/>
    <property type="project" value="Ensembl"/>
</dbReference>
<dbReference type="GO" id="GO:0061370">
    <property type="term" value="P:testosterone biosynthetic process"/>
    <property type="evidence" value="ECO:0000250"/>
    <property type="project" value="UniProtKB"/>
</dbReference>
<dbReference type="FunFam" id="1.20.120.1630:FF:000002">
    <property type="entry name" value="Steroid 5 alpha-reductase 1"/>
    <property type="match status" value="1"/>
</dbReference>
<dbReference type="Gene3D" id="1.20.120.1630">
    <property type="match status" value="1"/>
</dbReference>
<dbReference type="InterPro" id="IPR016636">
    <property type="entry name" value="3-oxo-5-alpha-steroid_4-DH"/>
</dbReference>
<dbReference type="InterPro" id="IPR001104">
    <property type="entry name" value="3-oxo-5_a-steroid_4-DH_C"/>
</dbReference>
<dbReference type="InterPro" id="IPR039357">
    <property type="entry name" value="SRD5A/TECR"/>
</dbReference>
<dbReference type="PANTHER" id="PTHR10556">
    <property type="entry name" value="3-OXO-5-ALPHA-STEROID 4-DEHYDROGENASE"/>
    <property type="match status" value="1"/>
</dbReference>
<dbReference type="PANTHER" id="PTHR10556:SF37">
    <property type="entry name" value="3-OXO-5-ALPHA-STEROID 4-DEHYDROGENASE 2"/>
    <property type="match status" value="1"/>
</dbReference>
<dbReference type="Pfam" id="PF02544">
    <property type="entry name" value="Steroid_dh"/>
    <property type="match status" value="1"/>
</dbReference>
<dbReference type="PIRSF" id="PIRSF015596">
    <property type="entry name" value="5_alpha-SR2"/>
    <property type="match status" value="1"/>
</dbReference>
<dbReference type="PROSITE" id="PS50244">
    <property type="entry name" value="S5A_REDUCTASE"/>
    <property type="match status" value="1"/>
</dbReference>